<reference key="1">
    <citation type="journal article" date="2011" name="Appl. Environ. Microbiol.">
        <title>Genomic potential of Marinobacter aquaeolei, a biogeochemical 'opportunitroph'.</title>
        <authorList>
            <person name="Singer E."/>
            <person name="Webb E.A."/>
            <person name="Nelson W.C."/>
            <person name="Heidelberg J.F."/>
            <person name="Ivanova N."/>
            <person name="Pati A."/>
            <person name="Edwards K.J."/>
        </authorList>
    </citation>
    <scope>NUCLEOTIDE SEQUENCE [LARGE SCALE GENOMIC DNA]</scope>
    <source>
        <strain>ATCC 700491 / DSM 11845 / VT8</strain>
    </source>
</reference>
<gene>
    <name evidence="1" type="primary">rplR</name>
    <name type="ordered locus">Maqu_0735</name>
</gene>
<organism>
    <name type="scientific">Marinobacter nauticus (strain ATCC 700491 / DSM 11845 / VT8)</name>
    <name type="common">Marinobacter aquaeolei</name>
    <dbReference type="NCBI Taxonomy" id="351348"/>
    <lineage>
        <taxon>Bacteria</taxon>
        <taxon>Pseudomonadati</taxon>
        <taxon>Pseudomonadota</taxon>
        <taxon>Gammaproteobacteria</taxon>
        <taxon>Pseudomonadales</taxon>
        <taxon>Marinobacteraceae</taxon>
        <taxon>Marinobacter</taxon>
    </lineage>
</organism>
<proteinExistence type="inferred from homology"/>
<comment type="function">
    <text evidence="1">This is one of the proteins that bind and probably mediate the attachment of the 5S RNA into the large ribosomal subunit, where it forms part of the central protuberance.</text>
</comment>
<comment type="subunit">
    <text evidence="1">Part of the 50S ribosomal subunit; part of the 5S rRNA/L5/L18/L25 subcomplex. Contacts the 5S and 23S rRNAs.</text>
</comment>
<comment type="similarity">
    <text evidence="1">Belongs to the universal ribosomal protein uL18 family.</text>
</comment>
<accession>A1TYL3</accession>
<protein>
    <recommendedName>
        <fullName evidence="1">Large ribosomal subunit protein uL18</fullName>
    </recommendedName>
    <alternativeName>
        <fullName evidence="2">50S ribosomal protein L18</fullName>
    </alternativeName>
</protein>
<name>RL18_MARN8</name>
<sequence length="115" mass="12695">MSANNERLRRARKVRMKIRELGTDRLCVHRTPRHMYAQVTTADGSKVLATASTLDKELRQGATGNVDAAKKVGQLIAERAKAAGIEKVAFDRSGYRYHGRVQALADAAREAGLQF</sequence>
<dbReference type="EMBL" id="CP000514">
    <property type="protein sequence ID" value="ABM17832.1"/>
    <property type="molecule type" value="Genomic_DNA"/>
</dbReference>
<dbReference type="RefSeq" id="WP_011784258.1">
    <property type="nucleotide sequence ID" value="NC_008740.1"/>
</dbReference>
<dbReference type="SMR" id="A1TYL3"/>
<dbReference type="STRING" id="351348.Maqu_0735"/>
<dbReference type="GeneID" id="94722546"/>
<dbReference type="KEGG" id="maq:Maqu_0735"/>
<dbReference type="eggNOG" id="COG0256">
    <property type="taxonomic scope" value="Bacteria"/>
</dbReference>
<dbReference type="HOGENOM" id="CLU_098841_0_1_6"/>
<dbReference type="OrthoDB" id="9810939at2"/>
<dbReference type="Proteomes" id="UP000000998">
    <property type="component" value="Chromosome"/>
</dbReference>
<dbReference type="GO" id="GO:0022625">
    <property type="term" value="C:cytosolic large ribosomal subunit"/>
    <property type="evidence" value="ECO:0007669"/>
    <property type="project" value="TreeGrafter"/>
</dbReference>
<dbReference type="GO" id="GO:0008097">
    <property type="term" value="F:5S rRNA binding"/>
    <property type="evidence" value="ECO:0007669"/>
    <property type="project" value="TreeGrafter"/>
</dbReference>
<dbReference type="GO" id="GO:0003735">
    <property type="term" value="F:structural constituent of ribosome"/>
    <property type="evidence" value="ECO:0007669"/>
    <property type="project" value="InterPro"/>
</dbReference>
<dbReference type="GO" id="GO:0006412">
    <property type="term" value="P:translation"/>
    <property type="evidence" value="ECO:0007669"/>
    <property type="project" value="UniProtKB-UniRule"/>
</dbReference>
<dbReference type="CDD" id="cd00432">
    <property type="entry name" value="Ribosomal_L18_L5e"/>
    <property type="match status" value="1"/>
</dbReference>
<dbReference type="FunFam" id="3.30.420.100:FF:000001">
    <property type="entry name" value="50S ribosomal protein L18"/>
    <property type="match status" value="1"/>
</dbReference>
<dbReference type="Gene3D" id="3.30.420.100">
    <property type="match status" value="1"/>
</dbReference>
<dbReference type="HAMAP" id="MF_01337_B">
    <property type="entry name" value="Ribosomal_uL18_B"/>
    <property type="match status" value="1"/>
</dbReference>
<dbReference type="InterPro" id="IPR004389">
    <property type="entry name" value="Ribosomal_uL18_bac-type"/>
</dbReference>
<dbReference type="InterPro" id="IPR005484">
    <property type="entry name" value="Ribosomal_uL18_bac/euk"/>
</dbReference>
<dbReference type="NCBIfam" id="TIGR00060">
    <property type="entry name" value="L18_bact"/>
    <property type="match status" value="1"/>
</dbReference>
<dbReference type="PANTHER" id="PTHR12899">
    <property type="entry name" value="39S RIBOSOMAL PROTEIN L18, MITOCHONDRIAL"/>
    <property type="match status" value="1"/>
</dbReference>
<dbReference type="PANTHER" id="PTHR12899:SF3">
    <property type="entry name" value="LARGE RIBOSOMAL SUBUNIT PROTEIN UL18M"/>
    <property type="match status" value="1"/>
</dbReference>
<dbReference type="Pfam" id="PF00861">
    <property type="entry name" value="Ribosomal_L18p"/>
    <property type="match status" value="1"/>
</dbReference>
<dbReference type="SUPFAM" id="SSF53137">
    <property type="entry name" value="Translational machinery components"/>
    <property type="match status" value="1"/>
</dbReference>
<keyword id="KW-0687">Ribonucleoprotein</keyword>
<keyword id="KW-0689">Ribosomal protein</keyword>
<keyword id="KW-0694">RNA-binding</keyword>
<keyword id="KW-0699">rRNA-binding</keyword>
<evidence type="ECO:0000255" key="1">
    <source>
        <dbReference type="HAMAP-Rule" id="MF_01337"/>
    </source>
</evidence>
<evidence type="ECO:0000305" key="2"/>
<feature type="chain" id="PRO_1000086670" description="Large ribosomal subunit protein uL18">
    <location>
        <begin position="1"/>
        <end position="115"/>
    </location>
</feature>